<geneLocation type="chloroplast"/>
<feature type="chain" id="PRO_0000359704" description="Photosystem II D2 protein">
    <location>
        <begin position="1"/>
        <end position="351"/>
    </location>
</feature>
<feature type="transmembrane region" description="Helical" evidence="1">
    <location>
        <begin position="39"/>
        <end position="59"/>
    </location>
</feature>
<feature type="transmembrane region" description="Helical" evidence="1">
    <location>
        <begin position="123"/>
        <end position="139"/>
    </location>
</feature>
<feature type="transmembrane region" description="Helical" evidence="1">
    <location>
        <begin position="151"/>
        <end position="164"/>
    </location>
</feature>
<feature type="transmembrane region" description="Helical" evidence="1">
    <location>
        <begin position="206"/>
        <end position="226"/>
    </location>
</feature>
<feature type="transmembrane region" description="Helical" evidence="1">
    <location>
        <begin position="277"/>
        <end position="293"/>
    </location>
</feature>
<feature type="binding site" description="axial binding residue" evidence="1">
    <location>
        <position position="116"/>
    </location>
    <ligand>
        <name>chlorophyll a</name>
        <dbReference type="ChEBI" id="CHEBI:58416"/>
        <label>ChlzD2</label>
    </ligand>
    <ligandPart>
        <name>Mg</name>
        <dbReference type="ChEBI" id="CHEBI:25107"/>
    </ligandPart>
</feature>
<feature type="binding site" evidence="1">
    <location>
        <position position="128"/>
    </location>
    <ligand>
        <name>pheophytin a</name>
        <dbReference type="ChEBI" id="CHEBI:136840"/>
        <label>D2</label>
    </ligand>
</feature>
<feature type="binding site" evidence="1">
    <location>
        <position position="141"/>
    </location>
    <ligand>
        <name>pheophytin a</name>
        <dbReference type="ChEBI" id="CHEBI:136840"/>
        <label>D2</label>
    </ligand>
</feature>
<feature type="binding site" description="axial binding residue" evidence="1">
    <location>
        <position position="196"/>
    </location>
    <ligand>
        <name>chlorophyll a</name>
        <dbReference type="ChEBI" id="CHEBI:58416"/>
        <label>PD2</label>
    </ligand>
    <ligandPart>
        <name>Mg</name>
        <dbReference type="ChEBI" id="CHEBI:25107"/>
    </ligandPart>
</feature>
<feature type="binding site" evidence="1">
    <location>
        <position position="213"/>
    </location>
    <ligand>
        <name>a plastoquinone</name>
        <dbReference type="ChEBI" id="CHEBI:17757"/>
        <label>Q(A)</label>
    </ligand>
</feature>
<feature type="binding site" evidence="1">
    <location>
        <position position="213"/>
    </location>
    <ligand>
        <name>Fe cation</name>
        <dbReference type="ChEBI" id="CHEBI:24875"/>
        <note>ligand shared with heterodimeric partner</note>
    </ligand>
</feature>
<feature type="binding site" evidence="1">
    <location>
        <position position="260"/>
    </location>
    <ligand>
        <name>a plastoquinone</name>
        <dbReference type="ChEBI" id="CHEBI:17757"/>
        <label>Q(A)</label>
    </ligand>
</feature>
<feature type="binding site" evidence="1">
    <location>
        <position position="267"/>
    </location>
    <ligand>
        <name>Fe cation</name>
        <dbReference type="ChEBI" id="CHEBI:24875"/>
        <note>ligand shared with heterodimeric partner</note>
    </ligand>
</feature>
<dbReference type="EC" id="1.10.3.9" evidence="1"/>
<dbReference type="EMBL" id="AB002583">
    <property type="protein sequence ID" value="BAC76164.1"/>
    <property type="molecule type" value="Genomic_DNA"/>
</dbReference>
<dbReference type="RefSeq" id="NP_849002.1">
    <property type="nucleotide sequence ID" value="NC_004799.1"/>
</dbReference>
<dbReference type="SMR" id="Q85G27"/>
<dbReference type="STRING" id="280699.Q85G27"/>
<dbReference type="EnsemblPlants" id="CMV081CT">
    <property type="protein sequence ID" value="CMV081CT"/>
    <property type="gene ID" value="CMV081C"/>
</dbReference>
<dbReference type="GeneID" id="844949"/>
<dbReference type="Gramene" id="CMV081CT">
    <property type="protein sequence ID" value="CMV081CT"/>
    <property type="gene ID" value="CMV081C"/>
</dbReference>
<dbReference type="KEGG" id="cme:CymeCp070"/>
<dbReference type="eggNOG" id="ENOG502QWJF">
    <property type="taxonomic scope" value="Eukaryota"/>
</dbReference>
<dbReference type="HOGENOM" id="CLU_077965_0_0_1"/>
<dbReference type="Proteomes" id="UP000007014">
    <property type="component" value="Chloroplast"/>
</dbReference>
<dbReference type="GO" id="GO:0009535">
    <property type="term" value="C:chloroplast thylakoid membrane"/>
    <property type="evidence" value="ECO:0007669"/>
    <property type="project" value="UniProtKB-SubCell"/>
</dbReference>
<dbReference type="GO" id="GO:0009523">
    <property type="term" value="C:photosystem II"/>
    <property type="evidence" value="ECO:0007669"/>
    <property type="project" value="UniProtKB-KW"/>
</dbReference>
<dbReference type="GO" id="GO:0016168">
    <property type="term" value="F:chlorophyll binding"/>
    <property type="evidence" value="ECO:0007669"/>
    <property type="project" value="UniProtKB-UniRule"/>
</dbReference>
<dbReference type="GO" id="GO:0045156">
    <property type="term" value="F:electron transporter, transferring electrons within the cyclic electron transport pathway of photosynthesis activity"/>
    <property type="evidence" value="ECO:0007669"/>
    <property type="project" value="InterPro"/>
</dbReference>
<dbReference type="GO" id="GO:0005506">
    <property type="term" value="F:iron ion binding"/>
    <property type="evidence" value="ECO:0007669"/>
    <property type="project" value="UniProtKB-UniRule"/>
</dbReference>
<dbReference type="GO" id="GO:0003729">
    <property type="term" value="F:mRNA binding"/>
    <property type="evidence" value="ECO:0007669"/>
    <property type="project" value="EnsemblPlants"/>
</dbReference>
<dbReference type="GO" id="GO:0016491">
    <property type="term" value="F:oxidoreductase activity"/>
    <property type="evidence" value="ECO:0007669"/>
    <property type="project" value="UniProtKB-KW"/>
</dbReference>
<dbReference type="GO" id="GO:0009772">
    <property type="term" value="P:photosynthetic electron transport in photosystem II"/>
    <property type="evidence" value="ECO:0007669"/>
    <property type="project" value="InterPro"/>
</dbReference>
<dbReference type="CDD" id="cd09288">
    <property type="entry name" value="Photosystem-II_D2"/>
    <property type="match status" value="1"/>
</dbReference>
<dbReference type="FunFam" id="1.20.85.10:FF:000001">
    <property type="entry name" value="photosystem II D2 protein-like"/>
    <property type="match status" value="1"/>
</dbReference>
<dbReference type="Gene3D" id="1.20.85.10">
    <property type="entry name" value="Photosystem II protein D1-like"/>
    <property type="match status" value="1"/>
</dbReference>
<dbReference type="HAMAP" id="MF_01383">
    <property type="entry name" value="PSII_PsbD_D2"/>
    <property type="match status" value="1"/>
</dbReference>
<dbReference type="InterPro" id="IPR055266">
    <property type="entry name" value="D1/D2"/>
</dbReference>
<dbReference type="InterPro" id="IPR036854">
    <property type="entry name" value="Photo_II_D1/D2_sf"/>
</dbReference>
<dbReference type="InterPro" id="IPR000484">
    <property type="entry name" value="Photo_RC_L/M"/>
</dbReference>
<dbReference type="InterPro" id="IPR055265">
    <property type="entry name" value="Photo_RC_L/M_CS"/>
</dbReference>
<dbReference type="InterPro" id="IPR005868">
    <property type="entry name" value="PSII_PsbD/D2"/>
</dbReference>
<dbReference type="NCBIfam" id="TIGR01152">
    <property type="entry name" value="psbD"/>
    <property type="match status" value="1"/>
</dbReference>
<dbReference type="PANTHER" id="PTHR33149:SF12">
    <property type="entry name" value="PHOTOSYSTEM II D2 PROTEIN"/>
    <property type="match status" value="1"/>
</dbReference>
<dbReference type="PANTHER" id="PTHR33149">
    <property type="entry name" value="PHOTOSYSTEM II PROTEIN D1"/>
    <property type="match status" value="1"/>
</dbReference>
<dbReference type="Pfam" id="PF00124">
    <property type="entry name" value="Photo_RC"/>
    <property type="match status" value="1"/>
</dbReference>
<dbReference type="PRINTS" id="PR00256">
    <property type="entry name" value="REACTNCENTRE"/>
</dbReference>
<dbReference type="SUPFAM" id="SSF81483">
    <property type="entry name" value="Bacterial photosystem II reaction centre, L and M subunits"/>
    <property type="match status" value="1"/>
</dbReference>
<dbReference type="PROSITE" id="PS00244">
    <property type="entry name" value="REACTION_CENTER"/>
    <property type="match status" value="1"/>
</dbReference>
<protein>
    <recommendedName>
        <fullName evidence="1">Photosystem II D2 protein</fullName>
        <shortName evidence="1">PSII D2 protein</shortName>
        <ecNumber evidence="1">1.10.3.9</ecNumber>
    </recommendedName>
    <alternativeName>
        <fullName evidence="1">Photosystem Q(A) protein</fullName>
    </alternativeName>
</protein>
<reference key="1">
    <citation type="journal article" date="2003" name="DNA Res.">
        <title>Complete sequence and analysis of the plastid genome of the unicellular red alga Cyanidioschyzon merolae.</title>
        <authorList>
            <person name="Ohta N."/>
            <person name="Matsuzaki M."/>
            <person name="Misumi O."/>
            <person name="Miyagishima S.-Y."/>
            <person name="Nozaki H."/>
            <person name="Tanaka K."/>
            <person name="Shin-i T."/>
            <person name="Kohara Y."/>
            <person name="Kuroiwa T."/>
        </authorList>
    </citation>
    <scope>NUCLEOTIDE SEQUENCE [LARGE SCALE GENOMIC DNA]</scope>
    <source>
        <strain>NIES-3377 / 10D</strain>
    </source>
</reference>
<accession>Q85G27</accession>
<proteinExistence type="inferred from homology"/>
<comment type="function">
    <text evidence="1">Photosystem II (PSII) is a light-driven water:plastoquinone oxidoreductase that uses light energy to abstract electrons from H(2)O, generating O(2) and a proton gradient subsequently used for ATP formation. It consists of a core antenna complex that captures photons, and an electron transfer chain that converts photonic excitation into a charge separation. The D1/D2 (PsbA/PsbD) reaction center heterodimer binds P680, the primary electron donor of PSII as well as several subsequent electron acceptors. D2 is needed for assembly of a stable PSII complex.</text>
</comment>
<comment type="catalytic activity">
    <reaction evidence="1">
        <text>2 a plastoquinone + 4 hnu + 2 H2O = 2 a plastoquinol + O2</text>
        <dbReference type="Rhea" id="RHEA:36359"/>
        <dbReference type="Rhea" id="RHEA-COMP:9561"/>
        <dbReference type="Rhea" id="RHEA-COMP:9562"/>
        <dbReference type="ChEBI" id="CHEBI:15377"/>
        <dbReference type="ChEBI" id="CHEBI:15379"/>
        <dbReference type="ChEBI" id="CHEBI:17757"/>
        <dbReference type="ChEBI" id="CHEBI:30212"/>
        <dbReference type="ChEBI" id="CHEBI:62192"/>
        <dbReference type="EC" id="1.10.3.9"/>
    </reaction>
</comment>
<comment type="cofactor">
    <text evidence="1">The D1/D2 heterodimer binds P680, chlorophylls that are the primary electron donor of PSII, and subsequent electron acceptors. It shares a non-heme iron and each subunit binds pheophytin, quinone, additional chlorophylls, carotenoids and lipids. There is also a Cl(-1) ion associated with D1 and D2, which is required for oxygen evolution. The PSII complex binds additional chlorophylls, carotenoids and specific lipids.</text>
</comment>
<comment type="subunit">
    <text evidence="1">PSII is composed of 1 copy each of membrane proteins PsbA, PsbB, PsbC, PsbD, PsbE, PsbF, PsbH, PsbI, PsbJ, PsbK, PsbL, PsbM, PsbT, PsbX, PsbY, PsbZ, Psb30/Ycf12, at least 3 peripheral proteins of the oxygen-evolving complex and a large number of cofactors. It forms dimeric complexes.</text>
</comment>
<comment type="subcellular location">
    <subcellularLocation>
        <location evidence="1">Plastid</location>
        <location evidence="1">Chloroplast thylakoid membrane</location>
        <topology evidence="1">Multi-pass membrane protein</topology>
    </subcellularLocation>
</comment>
<comment type="miscellaneous">
    <text evidence="1">2 of the reaction center chlorophylls (ChlD1 and ChlD2) are entirely coordinated by water.</text>
</comment>
<comment type="similarity">
    <text evidence="1">Belongs to the reaction center PufL/M/PsbA/D family.</text>
</comment>
<sequence length="351" mass="39290">MTIAIGREQERGWFDLMDDWLKRDRFVFIGWSGLLLFPCSYLALGAWFTGTTFVTSWYTHGLASSYLEGCNFLTAAVSSPANSMGHSLLFLWGPEAQGDFTRWCQIGGLWTFTALHGAFGLIGFCLRQFEIARLVGLRPYNAIAFSGPIAVFVSVFLLYPLGQASWFFAPSFGVAGIFRFILFLQGFHNWTLNPFHMMGVAGILGGALLCAIHGATVQNTLFEDGEASDTFRAFTPTQSEETYSMVTANRFWSQIFGVAFSNKRWLHFFLLFVPVAGLWASSIGIVGLALNLRAYDFVSQELRAAEDPEFETFYTKNILLNEGIRAWMAAQDQPHENFVFPEEVLPRGNAL</sequence>
<gene>
    <name evidence="1" type="primary">psbD</name>
</gene>
<organism>
    <name type="scientific">Cyanidioschyzon merolae (strain NIES-3377 / 10D)</name>
    <name type="common">Unicellular red alga</name>
    <dbReference type="NCBI Taxonomy" id="280699"/>
    <lineage>
        <taxon>Eukaryota</taxon>
        <taxon>Rhodophyta</taxon>
        <taxon>Bangiophyceae</taxon>
        <taxon>Cyanidiales</taxon>
        <taxon>Cyanidiaceae</taxon>
        <taxon>Cyanidioschyzon</taxon>
    </lineage>
</organism>
<name>PSBD_CYAM1</name>
<keyword id="KW-0148">Chlorophyll</keyword>
<keyword id="KW-0150">Chloroplast</keyword>
<keyword id="KW-0157">Chromophore</keyword>
<keyword id="KW-0249">Electron transport</keyword>
<keyword id="KW-0408">Iron</keyword>
<keyword id="KW-0460">Magnesium</keyword>
<keyword id="KW-0472">Membrane</keyword>
<keyword id="KW-0479">Metal-binding</keyword>
<keyword id="KW-0560">Oxidoreductase</keyword>
<keyword id="KW-0602">Photosynthesis</keyword>
<keyword id="KW-0604">Photosystem II</keyword>
<keyword id="KW-0934">Plastid</keyword>
<keyword id="KW-1185">Reference proteome</keyword>
<keyword id="KW-0793">Thylakoid</keyword>
<keyword id="KW-0812">Transmembrane</keyword>
<keyword id="KW-1133">Transmembrane helix</keyword>
<keyword id="KW-0813">Transport</keyword>
<evidence type="ECO:0000255" key="1">
    <source>
        <dbReference type="HAMAP-Rule" id="MF_01383"/>
    </source>
</evidence>